<evidence type="ECO:0000250" key="1">
    <source>
        <dbReference type="UniProtKB" id="P83480"/>
    </source>
</evidence>
<evidence type="ECO:0000269" key="2">
    <source>
    </source>
</evidence>
<evidence type="ECO:0000303" key="3">
    <source>
    </source>
</evidence>
<evidence type="ECO:0000305" key="4"/>
<evidence type="ECO:0000305" key="5">
    <source>
    </source>
</evidence>
<organism>
    <name type="scientific">Phormingochilus everetti</name>
    <name type="common">Malaysian purple earth tiger tarantula</name>
    <dbReference type="NCBI Taxonomy" id="2751878"/>
    <lineage>
        <taxon>Eukaryota</taxon>
        <taxon>Metazoa</taxon>
        <taxon>Ecdysozoa</taxon>
        <taxon>Arthropoda</taxon>
        <taxon>Chelicerata</taxon>
        <taxon>Arachnida</taxon>
        <taxon>Araneae</taxon>
        <taxon>Mygalomorphae</taxon>
        <taxon>Theraphosidae</taxon>
        <taxon>Phormingochilus</taxon>
    </lineage>
</organism>
<sequence length="34" mass="3982">ECRYWLGGCSKTGDCCEHLSCSPKWHWCVWDGTF</sequence>
<keyword id="KW-0903">Direct protein sequencing</keyword>
<keyword id="KW-1015">Disulfide bond</keyword>
<keyword id="KW-0872">Ion channel impairing toxin</keyword>
<keyword id="KW-0960">Knottin</keyword>
<keyword id="KW-0528">Neurotoxin</keyword>
<keyword id="KW-0964">Secreted</keyword>
<keyword id="KW-0800">Toxin</keyword>
<keyword id="KW-0738">Voltage-gated sodium channel impairing toxin</keyword>
<dbReference type="SMR" id="P0DQN2"/>
<dbReference type="GO" id="GO:0005576">
    <property type="term" value="C:extracellular region"/>
    <property type="evidence" value="ECO:0007669"/>
    <property type="project" value="UniProtKB-SubCell"/>
</dbReference>
<dbReference type="GO" id="GO:0008200">
    <property type="term" value="F:ion channel inhibitor activity"/>
    <property type="evidence" value="ECO:0007669"/>
    <property type="project" value="InterPro"/>
</dbReference>
<dbReference type="GO" id="GO:0017080">
    <property type="term" value="F:sodium channel regulator activity"/>
    <property type="evidence" value="ECO:0007669"/>
    <property type="project" value="UniProtKB-KW"/>
</dbReference>
<dbReference type="GO" id="GO:0090729">
    <property type="term" value="F:toxin activity"/>
    <property type="evidence" value="ECO:0007669"/>
    <property type="project" value="UniProtKB-KW"/>
</dbReference>
<dbReference type="InterPro" id="IPR011696">
    <property type="entry name" value="Huwentoxin-1"/>
</dbReference>
<dbReference type="Pfam" id="PF07740">
    <property type="entry name" value="Toxin_12"/>
    <property type="match status" value="1"/>
</dbReference>
<dbReference type="SUPFAM" id="SSF57059">
    <property type="entry name" value="omega toxin-like"/>
    <property type="match status" value="1"/>
</dbReference>
<name>PE1B_PHOEV</name>
<comment type="function">
    <text evidence="2">Ion channel impairing toxin that inhibits several voltage-gated sodium channels. It acts by inhibiting the inward component of the sodium current and by shifting the voltage dependence of channel activation to more depolarized potentials (PubMed:32511987). Its most potent activity is on Nav1.7/SCN9A (IC(50)=167 nM), followed by Nav1.6/SCN8A (IC(50)=696 nM), and Nav1.2/SCN2A (IC(50)=3.54 uM) (PubMed:32511987).</text>
</comment>
<comment type="subcellular location">
    <subcellularLocation>
        <location evidence="2">Secreted</location>
    </subcellularLocation>
</comment>
<comment type="tissue specificity">
    <text evidence="5">Expressed by the venom gland.</text>
</comment>
<comment type="domain">
    <text evidence="1">The presence of a 'disulfide through disulfide knot' structurally defines this protein as a knottin.</text>
</comment>
<comment type="miscellaneous">
    <text evidence="2">Negative results: the recombinant toxin does not show or very weak activity on Nav1.5/SCN5A (IC(50)&gt;10 uM).</text>
</comment>
<comment type="similarity">
    <text evidence="4">Belongs to the neurotoxin 10 (Hwtx-1) family. 54 (ProTx-1) subfamily.</text>
</comment>
<accession>P0DQN2</accession>
<protein>
    <recommendedName>
        <fullName evidence="3">Beta/mu-theraphotoxin-Pe1b</fullName>
        <shortName evidence="3">Beta/mu-TRTX-Pe1b</shortName>
    </recommendedName>
</protein>
<reference key="1">
    <citation type="journal article" date="2020" name="Biochem. Pharmacol.">
        <title>Mutational analysis of ProTx-I and the novel venom peptide Pe1b provide insight into residues responsible for selective inhibition of the analgesic drug target NaV1.7.</title>
        <authorList>
            <person name="Rupasinghe D.B."/>
            <person name="Herzig V."/>
            <person name="Vetter I."/>
            <person name="Dekan Z."/>
            <person name="Gilchrist J."/>
            <person name="Bosmans F."/>
            <person name="Alewood P.F."/>
            <person name="Lewis R.J."/>
            <person name="King G.F."/>
        </authorList>
    </citation>
    <scope>PROTEIN SEQUENCE</scope>
    <scope>FUNCTION</scope>
    <scope>SUBCELLULAR LOCATION</scope>
    <scope>RECOMBINANT EXPRESSION</scope>
    <scope>MUTAGENESIS OF GLU-17; SER-20; 23-PRO--HIS-26 AND PHE-34</scope>
    <source>
        <tissue>Venom</tissue>
    </source>
</reference>
<proteinExistence type="evidence at protein level"/>
<feature type="chain" id="PRO_0000451452" description="Beta/mu-theraphotoxin-Pe1b">
    <location>
        <begin position="1"/>
        <end position="34"/>
    </location>
</feature>
<feature type="disulfide bond" evidence="1">
    <location>
        <begin position="2"/>
        <end position="16"/>
    </location>
</feature>
<feature type="disulfide bond" evidence="1">
    <location>
        <begin position="9"/>
        <end position="21"/>
    </location>
</feature>
<feature type="disulfide bond" evidence="1">
    <location>
        <begin position="15"/>
        <end position="28"/>
    </location>
</feature>
<feature type="mutagenesis site" description="No change in ability to inhibit Nav1.2/SCN2A, 14-fold increase in ability to inhibit Nav1.5/SCN5A, and 3-fold increase in ability to inhibit Nav1.7/SCN9A." evidence="2">
    <original>E</original>
    <variation>K</variation>
    <location>
        <position position="17"/>
    </location>
</feature>
<feature type="mutagenesis site" description="4.6-fold increase in ability to inhibit Nav1.2/SCN2A, and no change in ability to inhibit both Nav1.5/SNC5A and Nav1.7/SCN9A." evidence="2">
    <original>S</original>
    <variation>V</variation>
    <location>
        <position position="20"/>
    </location>
</feature>
<feature type="mutagenesis site" description="In Pe1b-L4; dramatic increase in ability to inhibit Nav1.2/SCN2A, moderate increase in ability to inhibit Nav1.5/SCN5A, and no change in ability to inhibit Nav1.7/SCN9A." evidence="2">
    <original>PKWH</original>
    <variation>RRHG</variation>
    <location>
        <begin position="23"/>
        <end position="26"/>
    </location>
</feature>
<feature type="mutagenesis site" description="6-fold increase in ability to inhibit Nav1.2/SCN2A, and no change in ability to inhibit both Nav1.5/SCN5A and Nav1.7/SCN9A." evidence="2">
    <original>F</original>
    <variation>FS</variation>
    <location>
        <position position="34"/>
    </location>
</feature>